<proteinExistence type="inferred from homology"/>
<evidence type="ECO:0000250" key="1">
    <source>
        <dbReference type="UniProtKB" id="Q68FD7"/>
    </source>
</evidence>
<evidence type="ECO:0000250" key="2">
    <source>
        <dbReference type="UniProtKB" id="Q8TF40"/>
    </source>
</evidence>
<evidence type="ECO:0000250" key="3">
    <source>
        <dbReference type="UniProtKB" id="Q9P278"/>
    </source>
</evidence>
<evidence type="ECO:0000255" key="4">
    <source>
        <dbReference type="PROSITE-ProRule" id="PRU01180"/>
    </source>
</evidence>
<evidence type="ECO:0000256" key="5">
    <source>
        <dbReference type="SAM" id="MobiDB-lite"/>
    </source>
</evidence>
<evidence type="ECO:0000305" key="6"/>
<organism>
    <name type="scientific">Gallus gallus</name>
    <name type="common">Chicken</name>
    <dbReference type="NCBI Taxonomy" id="9031"/>
    <lineage>
        <taxon>Eukaryota</taxon>
        <taxon>Metazoa</taxon>
        <taxon>Chordata</taxon>
        <taxon>Craniata</taxon>
        <taxon>Vertebrata</taxon>
        <taxon>Euteleostomi</taxon>
        <taxon>Archelosauria</taxon>
        <taxon>Archosauria</taxon>
        <taxon>Dinosauria</taxon>
        <taxon>Saurischia</taxon>
        <taxon>Theropoda</taxon>
        <taxon>Coelurosauria</taxon>
        <taxon>Aves</taxon>
        <taxon>Neognathae</taxon>
        <taxon>Galloanserae</taxon>
        <taxon>Galliformes</taxon>
        <taxon>Phasianidae</taxon>
        <taxon>Phasianinae</taxon>
        <taxon>Gallus</taxon>
    </lineage>
</organism>
<accession>Q5W4S4</accession>
<gene>
    <name evidence="2" type="primary">FNIP1</name>
</gene>
<reference key="1">
    <citation type="journal article" date="2004" name="J. Interferon Cytokine Res.">
        <title>Characterization of the first nonmammalian T2 cytokine gene cluster: the cluster contains functional single-copy genes for IL-3, IL-4, IL-13, and GM-CSF, a gene for IL-5 that appears to be a pseudogene, and a gene encoding another cytokinelike transcript, KK34.</title>
        <authorList>
            <person name="Avery S."/>
            <person name="Rothwell L."/>
            <person name="Degen W.D.J."/>
            <person name="Schijns V.E.J.C."/>
            <person name="Young J."/>
            <person name="Kaufman J."/>
            <person name="Kaiser P."/>
        </authorList>
    </citation>
    <scope>NUCLEOTIDE SEQUENCE [GENOMIC DNA]</scope>
</reference>
<sequence length="1157" mass="128311">MESPLFELNSALSAASSKSEAMLCSISSKGSWPLPEFDPSQIRLIVYQDCERRGRNVLFDSSAKRKIEDVSVSKLCSDAQVRVFGKCCQLKPGGDSSSSLDSSINSSSSFSDAKEQCPKYQGSRCSSDANMLGEMMFGSVAMSYKGSTLKIHQIRSPPQLMLSKVFTARTGSSIYGSLNTLQDSLEFINQDSNTLKPDHSTIMNGLLGNIVHSNPMDMPGREQNEDRDSGIARSASLSSLLITPFPSPGSSFNKSCASSYQRRWRRSQTTSLENGVFPRWSMDESFNLSDDSSGPSPGIVRKKKIAIGVIFSLSRDEDENNKFNEFFFSHFPLFESHMNKLKSAIEQLCLVLLICLMLVFKAMKMSRRSADASQRSLAYNRIVDALNEFRTTICNLYTMPRIGEPVWLTMMSGTPEKNQLCHRFMKEFTFLMENAAKNQFLPALLTAVLTNHLAWVPTVMPNGQPPIRIFLEKHSSQSVDMLAKTHPYNPLWAQLGDLYGAIGSPVRLAKTVVVGKRHDLVQRLLYFLTYFIRCSELQETHLLENGEDEAIVMPGTVITTTLEKGEVEESEYVLVTMHKNRGNLLPKESEEMRTPNCSCKNCKCPISLAQNIEGVSQQEREDAQNTPKVELETSSDESRTIVPDDGQEDAADGHQPRTCQDTKVESVVCTGSSSPEKRVLAESGLEATANMWRNEDVLEAGSQAISATRSPGIAVEKKPPDKLFCDAFPCSAAEAQTKVTFLIGDSMSPDSDIELRSQAVVEQIARHHSPPTAEEGVSADQNCEAKQTVEDQNRDCGTAEPFPQVASEHQSWNPNAYNAEGMSLFDDNFTDDGSVETRTMDDLPGQAAAELLTHNSNLEFSKKLCTKTSKPPSEFCKFMDSVRQETYKNCFAEQDQREKISIRVPHGDRENAEKKVAPGIDWDIPRNESSDSALGDSESEDAGHELTRPSSNYYGGEQEDWAEEYEIPFPGSKLVEVNSVQPSIANFGRSLLGGYCSSYVPDFVLQGIGSDEKLRHCLVSDLSHAVQHPVLDEPIAEAVCIIADTDKWTVQVASSQRRMIDNKLGKEVLVSSLVSNLLHSTLQLYKHNLSPNFCVMHLEDRLQELYFKSKMLSEYLKGQMRVHVKELGVVLGIESSDLPLLAAVASTHSPYVAQILL</sequence>
<dbReference type="EMBL" id="AJ621744">
    <property type="protein sequence ID" value="CAF34415.1"/>
    <property type="molecule type" value="Genomic_DNA"/>
</dbReference>
<dbReference type="RefSeq" id="NP_001034403.1">
    <property type="nucleotide sequence ID" value="NM_001039314.1"/>
</dbReference>
<dbReference type="SMR" id="Q5W4S4"/>
<dbReference type="FunCoup" id="Q5W4S4">
    <property type="interactions" value="2311"/>
</dbReference>
<dbReference type="STRING" id="9031.ENSGALP00000058436"/>
<dbReference type="PaxDb" id="9031-ENSGALP00000010596"/>
<dbReference type="Ensembl" id="ENSGALT00010038725.1">
    <property type="protein sequence ID" value="ENSGALP00010022395.1"/>
    <property type="gene ID" value="ENSGALG00010016097.1"/>
</dbReference>
<dbReference type="KEGG" id="gga:427642"/>
<dbReference type="VEuPathDB" id="HostDB:geneid_427642"/>
<dbReference type="eggNOG" id="KOG3693">
    <property type="taxonomic scope" value="Eukaryota"/>
</dbReference>
<dbReference type="GeneTree" id="ENSGT00390000009391"/>
<dbReference type="HOGENOM" id="CLU_003447_0_0_1"/>
<dbReference type="InParanoid" id="Q5W4S4"/>
<dbReference type="OrthoDB" id="10051712at2759"/>
<dbReference type="PhylomeDB" id="Q5W4S4"/>
<dbReference type="PRO" id="PR:Q5W4S4"/>
<dbReference type="Proteomes" id="UP000000539">
    <property type="component" value="Chromosome 13"/>
</dbReference>
<dbReference type="GO" id="GO:0005737">
    <property type="term" value="C:cytoplasm"/>
    <property type="evidence" value="ECO:0000318"/>
    <property type="project" value="GO_Central"/>
</dbReference>
<dbReference type="GO" id="GO:0005829">
    <property type="term" value="C:cytosol"/>
    <property type="evidence" value="ECO:0000250"/>
    <property type="project" value="UniProtKB"/>
</dbReference>
<dbReference type="GO" id="GO:0005765">
    <property type="term" value="C:lysosomal membrane"/>
    <property type="evidence" value="ECO:0000250"/>
    <property type="project" value="UniProtKB"/>
</dbReference>
<dbReference type="GO" id="GO:0042030">
    <property type="term" value="F:ATPase inhibitor activity"/>
    <property type="evidence" value="ECO:0000250"/>
    <property type="project" value="UniProtKB"/>
</dbReference>
<dbReference type="GO" id="GO:0051087">
    <property type="term" value="F:protein-folding chaperone binding"/>
    <property type="evidence" value="ECO:0000250"/>
    <property type="project" value="UniProtKB"/>
</dbReference>
<dbReference type="GO" id="GO:1905672">
    <property type="term" value="P:negative regulation of lysosome organization"/>
    <property type="evidence" value="ECO:0000250"/>
    <property type="project" value="UniProtKB"/>
</dbReference>
<dbReference type="GO" id="GO:0032008">
    <property type="term" value="P:positive regulation of TOR signaling"/>
    <property type="evidence" value="ECO:0000250"/>
    <property type="project" value="UniProtKB"/>
</dbReference>
<dbReference type="GO" id="GO:1904263">
    <property type="term" value="P:positive regulation of TORC1 signaling"/>
    <property type="evidence" value="ECO:0000250"/>
    <property type="project" value="UniProtKB"/>
</dbReference>
<dbReference type="InterPro" id="IPR037545">
    <property type="entry name" value="DENN_FNIP1/2"/>
</dbReference>
<dbReference type="InterPro" id="IPR028086">
    <property type="entry name" value="FNIP_C_dom"/>
</dbReference>
<dbReference type="InterPro" id="IPR026156">
    <property type="entry name" value="FNIP_fam"/>
</dbReference>
<dbReference type="InterPro" id="IPR028085">
    <property type="entry name" value="FNIP_mid_dom"/>
</dbReference>
<dbReference type="InterPro" id="IPR028084">
    <property type="entry name" value="FNIP_N_dom"/>
</dbReference>
<dbReference type="PANTHER" id="PTHR21634:SF12">
    <property type="entry name" value="FOLLICULIN-INTERACTING PROTEIN 1"/>
    <property type="match status" value="1"/>
</dbReference>
<dbReference type="PANTHER" id="PTHR21634">
    <property type="entry name" value="RE13835P"/>
    <property type="match status" value="1"/>
</dbReference>
<dbReference type="Pfam" id="PF14638">
    <property type="entry name" value="FNIP_C"/>
    <property type="match status" value="1"/>
</dbReference>
<dbReference type="Pfam" id="PF14637">
    <property type="entry name" value="FNIP_M"/>
    <property type="match status" value="1"/>
</dbReference>
<dbReference type="Pfam" id="PF14636">
    <property type="entry name" value="FNIP_N"/>
    <property type="match status" value="1"/>
</dbReference>
<dbReference type="PRINTS" id="PR02073">
    <property type="entry name" value="FOLLICULNIP1"/>
</dbReference>
<dbReference type="PROSITE" id="PS51836">
    <property type="entry name" value="DENN_FNIP12"/>
    <property type="match status" value="1"/>
</dbReference>
<name>FNIP1_CHICK</name>
<protein>
    <recommendedName>
        <fullName evidence="2">Folliculin-interacting protein 1</fullName>
    </recommendedName>
</protein>
<comment type="function">
    <text evidence="1 2 3">Binding partner of the GTPase-activating protein FLCN: involved in the cellular response to amino acid availability by regulating the non-canonical mTORC1 signaling cascade controlling the MiT/TFE factors TFEB and TFE3. Required to promote FLCN recruitment to lysosomes and interaction with Rag GTPases, leading to activation of the non-canonical mTORC1 signaling. In low-amino acid conditions, component of the lysosomal folliculin complex (LFC) on the membrane of lysosomes, which inhibits the GTPase-activating activity of FLCN, thereby inactivating mTORC1 and promoting nuclear translocation of TFEB and TFE3. Upon amino acid restimulation, disassembly of the LFC complex liberates the GTPase-activating activity of FLCN, leading to activation of mTORC1 and subsequent inactivation of TFEB and TFE3. In addition to its role in mTORC1 signaling, also acts as a co-chaperone of HSP90AA1/Hsp90: inhibits the ATPase activity of HSP90AA1/Hsp90, leading to activate both kinase and non-kinase client proteins of HSP90AA1/Hsp90. Acts as a scaffold to load client protein FLCN onto HSP90AA1/Hsp90.</text>
</comment>
<comment type="subunit">
    <text evidence="2 3">Homodimer and homomultimer. Heterodimer and heteromultimer with FNIP2 (By similarity). Component of the lysosomal folliculin complex (LFC) (By similarity).</text>
</comment>
<comment type="subcellular location">
    <subcellularLocation>
        <location evidence="2">Lysosome membrane</location>
    </subcellularLocation>
    <subcellularLocation>
        <location evidence="2">Cytoplasm</location>
        <location evidence="2">Cytosol</location>
    </subcellularLocation>
    <text evidence="2">Localizes to lysosome membrane in amino acid-depleted conditions and relocalizes to the cytosol upon refeeding. Colocalizes with FLCN in the cytoplasm.</text>
</comment>
<comment type="similarity">
    <text evidence="6">Belongs to the FNIP family.</text>
</comment>
<feature type="chain" id="PRO_0000308486" description="Folliculin-interacting protein 1">
    <location>
        <begin position="1"/>
        <end position="1157"/>
    </location>
</feature>
<feature type="domain" description="uDENN FNIP1/2-type" evidence="4">
    <location>
        <begin position="37"/>
        <end position="467"/>
    </location>
</feature>
<feature type="domain" description="cDENN FNIP1/2-type" evidence="4">
    <location>
        <begin position="475"/>
        <end position="1083"/>
    </location>
</feature>
<feature type="domain" description="dDENN FNIP1/2-type" evidence="4">
    <location>
        <begin position="1093"/>
        <end position="1148"/>
    </location>
</feature>
<feature type="region of interest" description="Disordered" evidence="5">
    <location>
        <begin position="92"/>
        <end position="120"/>
    </location>
</feature>
<feature type="region of interest" description="Disordered" evidence="5">
    <location>
        <begin position="616"/>
        <end position="665"/>
    </location>
</feature>
<feature type="region of interest" description="Disordered" evidence="5">
    <location>
        <begin position="769"/>
        <end position="796"/>
    </location>
</feature>
<feature type="region of interest" description="Disordered" evidence="5">
    <location>
        <begin position="904"/>
        <end position="955"/>
    </location>
</feature>
<feature type="compositionally biased region" description="Low complexity" evidence="5">
    <location>
        <begin position="95"/>
        <end position="111"/>
    </location>
</feature>
<feature type="compositionally biased region" description="Basic and acidic residues" evidence="5">
    <location>
        <begin position="651"/>
        <end position="664"/>
    </location>
</feature>
<feature type="compositionally biased region" description="Basic and acidic residues" evidence="5">
    <location>
        <begin position="904"/>
        <end position="916"/>
    </location>
</feature>
<keyword id="KW-0963">Cytoplasm</keyword>
<keyword id="KW-0458">Lysosome</keyword>
<keyword id="KW-0472">Membrane</keyword>
<keyword id="KW-1185">Reference proteome</keyword>